<keyword id="KW-0333">Golgi apparatus</keyword>
<keyword id="KW-0472">Membrane</keyword>
<keyword id="KW-0489">Methyltransferase</keyword>
<keyword id="KW-1185">Reference proteome</keyword>
<keyword id="KW-0949">S-adenosyl-L-methionine</keyword>
<keyword id="KW-0808">Transferase</keyword>
<keyword id="KW-0812">Transmembrane</keyword>
<keyword id="KW-1133">Transmembrane helix</keyword>
<accession>Q9T0F7</accession>
<name>GXM2_ARATH</name>
<reference key="1">
    <citation type="journal article" date="2012" name="Plant Cell Physiol.">
        <title>Three Arabidopsis DUF579 domain-containing GXM proteins are methyltransferases catalyzing 4-O-methylation of glucuronic acid on xylan.</title>
        <authorList>
            <person name="Lee C."/>
            <person name="Teng Q."/>
            <person name="Zhong R."/>
            <person name="Yuan Y."/>
            <person name="Haghighat M."/>
            <person name="Ye Z.H."/>
        </authorList>
    </citation>
    <scope>NUCLEOTIDE SEQUENCE [MRNA]</scope>
    <scope>FUNCTION</scope>
    <scope>CATALYTIC ACTIVITY</scope>
    <scope>TISSUE SPECIFICITY</scope>
    <scope>SUBCELLULAR LOCATION</scope>
    <scope>DISRUPTION PHENOTYPE</scope>
</reference>
<reference key="2">
    <citation type="journal article" date="1999" name="Nature">
        <title>Sequence and analysis of chromosome 4 of the plant Arabidopsis thaliana.</title>
        <authorList>
            <person name="Mayer K.F.X."/>
            <person name="Schueller C."/>
            <person name="Wambutt R."/>
            <person name="Murphy G."/>
            <person name="Volckaert G."/>
            <person name="Pohl T."/>
            <person name="Duesterhoeft A."/>
            <person name="Stiekema W."/>
            <person name="Entian K.-D."/>
            <person name="Terryn N."/>
            <person name="Harris B."/>
            <person name="Ansorge W."/>
            <person name="Brandt P."/>
            <person name="Grivell L.A."/>
            <person name="Rieger M."/>
            <person name="Weichselgartner M."/>
            <person name="de Simone V."/>
            <person name="Obermaier B."/>
            <person name="Mache R."/>
            <person name="Mueller M."/>
            <person name="Kreis M."/>
            <person name="Delseny M."/>
            <person name="Puigdomenech P."/>
            <person name="Watson M."/>
            <person name="Schmidtheini T."/>
            <person name="Reichert B."/>
            <person name="Portetelle D."/>
            <person name="Perez-Alonso M."/>
            <person name="Boutry M."/>
            <person name="Bancroft I."/>
            <person name="Vos P."/>
            <person name="Hoheisel J."/>
            <person name="Zimmermann W."/>
            <person name="Wedler H."/>
            <person name="Ridley P."/>
            <person name="Langham S.-A."/>
            <person name="McCullagh B."/>
            <person name="Bilham L."/>
            <person name="Robben J."/>
            <person name="van der Schueren J."/>
            <person name="Grymonprez B."/>
            <person name="Chuang Y.-J."/>
            <person name="Vandenbussche F."/>
            <person name="Braeken M."/>
            <person name="Weltjens I."/>
            <person name="Voet M."/>
            <person name="Bastiaens I."/>
            <person name="Aert R."/>
            <person name="Defoor E."/>
            <person name="Weitzenegger T."/>
            <person name="Bothe G."/>
            <person name="Ramsperger U."/>
            <person name="Hilbert H."/>
            <person name="Braun M."/>
            <person name="Holzer E."/>
            <person name="Brandt A."/>
            <person name="Peters S."/>
            <person name="van Staveren M."/>
            <person name="Dirkse W."/>
            <person name="Mooijman P."/>
            <person name="Klein Lankhorst R."/>
            <person name="Rose M."/>
            <person name="Hauf J."/>
            <person name="Koetter P."/>
            <person name="Berneiser S."/>
            <person name="Hempel S."/>
            <person name="Feldpausch M."/>
            <person name="Lamberth S."/>
            <person name="Van den Daele H."/>
            <person name="De Keyser A."/>
            <person name="Buysshaert C."/>
            <person name="Gielen J."/>
            <person name="Villarroel R."/>
            <person name="De Clercq R."/>
            <person name="van Montagu M."/>
            <person name="Rogers J."/>
            <person name="Cronin A."/>
            <person name="Quail M.A."/>
            <person name="Bray-Allen S."/>
            <person name="Clark L."/>
            <person name="Doggett J."/>
            <person name="Hall S."/>
            <person name="Kay M."/>
            <person name="Lennard N."/>
            <person name="McLay K."/>
            <person name="Mayes R."/>
            <person name="Pettett A."/>
            <person name="Rajandream M.A."/>
            <person name="Lyne M."/>
            <person name="Benes V."/>
            <person name="Rechmann S."/>
            <person name="Borkova D."/>
            <person name="Bloecker H."/>
            <person name="Scharfe M."/>
            <person name="Grimm M."/>
            <person name="Loehnert T.-H."/>
            <person name="Dose S."/>
            <person name="de Haan M."/>
            <person name="Maarse A.C."/>
            <person name="Schaefer M."/>
            <person name="Mueller-Auer S."/>
            <person name="Gabel C."/>
            <person name="Fuchs M."/>
            <person name="Fartmann B."/>
            <person name="Granderath K."/>
            <person name="Dauner D."/>
            <person name="Herzl A."/>
            <person name="Neumann S."/>
            <person name="Argiriou A."/>
            <person name="Vitale D."/>
            <person name="Liguori R."/>
            <person name="Piravandi E."/>
            <person name="Massenet O."/>
            <person name="Quigley F."/>
            <person name="Clabauld G."/>
            <person name="Muendlein A."/>
            <person name="Felber R."/>
            <person name="Schnabl S."/>
            <person name="Hiller R."/>
            <person name="Schmidt W."/>
            <person name="Lecharny A."/>
            <person name="Aubourg S."/>
            <person name="Chefdor F."/>
            <person name="Cooke R."/>
            <person name="Berger C."/>
            <person name="Monfort A."/>
            <person name="Casacuberta E."/>
            <person name="Gibbons T."/>
            <person name="Weber N."/>
            <person name="Vandenbol M."/>
            <person name="Bargues M."/>
            <person name="Terol J."/>
            <person name="Torres A."/>
            <person name="Perez-Perez A."/>
            <person name="Purnelle B."/>
            <person name="Bent E."/>
            <person name="Johnson S."/>
            <person name="Tacon D."/>
            <person name="Jesse T."/>
            <person name="Heijnen L."/>
            <person name="Schwarz S."/>
            <person name="Scholler P."/>
            <person name="Heber S."/>
            <person name="Francs P."/>
            <person name="Bielke C."/>
            <person name="Frishman D."/>
            <person name="Haase D."/>
            <person name="Lemcke K."/>
            <person name="Mewes H.-W."/>
            <person name="Stocker S."/>
            <person name="Zaccaria P."/>
            <person name="Bevan M."/>
            <person name="Wilson R.K."/>
            <person name="de la Bastide M."/>
            <person name="Habermann K."/>
            <person name="Parnell L."/>
            <person name="Dedhia N."/>
            <person name="Gnoj L."/>
            <person name="Schutz K."/>
            <person name="Huang E."/>
            <person name="Spiegel L."/>
            <person name="Sekhon M."/>
            <person name="Murray J."/>
            <person name="Sheet P."/>
            <person name="Cordes M."/>
            <person name="Abu-Threideh J."/>
            <person name="Stoneking T."/>
            <person name="Kalicki J."/>
            <person name="Graves T."/>
            <person name="Harmon G."/>
            <person name="Edwards J."/>
            <person name="Latreille P."/>
            <person name="Courtney L."/>
            <person name="Cloud J."/>
            <person name="Abbott A."/>
            <person name="Scott K."/>
            <person name="Johnson D."/>
            <person name="Minx P."/>
            <person name="Bentley D."/>
            <person name="Fulton B."/>
            <person name="Miller N."/>
            <person name="Greco T."/>
            <person name="Kemp K."/>
            <person name="Kramer J."/>
            <person name="Fulton L."/>
            <person name="Mardis E."/>
            <person name="Dante M."/>
            <person name="Pepin K."/>
            <person name="Hillier L.W."/>
            <person name="Nelson J."/>
            <person name="Spieth J."/>
            <person name="Ryan E."/>
            <person name="Andrews S."/>
            <person name="Geisel C."/>
            <person name="Layman D."/>
            <person name="Du H."/>
            <person name="Ali J."/>
            <person name="Berghoff A."/>
            <person name="Jones K."/>
            <person name="Drone K."/>
            <person name="Cotton M."/>
            <person name="Joshu C."/>
            <person name="Antonoiu B."/>
            <person name="Zidanic M."/>
            <person name="Strong C."/>
            <person name="Sun H."/>
            <person name="Lamar B."/>
            <person name="Yordan C."/>
            <person name="Ma P."/>
            <person name="Zhong J."/>
            <person name="Preston R."/>
            <person name="Vil D."/>
            <person name="Shekher M."/>
            <person name="Matero A."/>
            <person name="Shah R."/>
            <person name="Swaby I.K."/>
            <person name="O'Shaughnessy A."/>
            <person name="Rodriguez M."/>
            <person name="Hoffman J."/>
            <person name="Till S."/>
            <person name="Granat S."/>
            <person name="Shohdy N."/>
            <person name="Hasegawa A."/>
            <person name="Hameed A."/>
            <person name="Lodhi M."/>
            <person name="Johnson A."/>
            <person name="Chen E."/>
            <person name="Marra M.A."/>
            <person name="Martienssen R."/>
            <person name="McCombie W.R."/>
        </authorList>
    </citation>
    <scope>NUCLEOTIDE SEQUENCE [LARGE SCALE GENOMIC DNA]</scope>
    <source>
        <strain>cv. Columbia</strain>
    </source>
</reference>
<reference key="3">
    <citation type="journal article" date="2017" name="Plant J.">
        <title>Araport11: a complete reannotation of the Arabidopsis thaliana reference genome.</title>
        <authorList>
            <person name="Cheng C.Y."/>
            <person name="Krishnakumar V."/>
            <person name="Chan A.P."/>
            <person name="Thibaud-Nissen F."/>
            <person name="Schobel S."/>
            <person name="Town C.D."/>
        </authorList>
    </citation>
    <scope>GENOME REANNOTATION</scope>
    <source>
        <strain>cv. Columbia</strain>
    </source>
</reference>
<reference key="4">
    <citation type="submission" date="2007-01" db="EMBL/GenBank/DDBJ databases">
        <title>Arabidopsis ORF clones.</title>
        <authorList>
            <person name="Kim C.J."/>
            <person name="Bautista V.R."/>
            <person name="Chen H."/>
            <person name="De Los Reyes C."/>
            <person name="Wu S.Y."/>
            <person name="Ecker J.R."/>
        </authorList>
    </citation>
    <scope>NUCLEOTIDE SEQUENCE [LARGE SCALE MRNA]</scope>
</reference>
<reference key="5">
    <citation type="journal article" date="2011" name="Plant J.">
        <title>The DUF579 domain containing proteins IRX15 and IRX15-L affect xylan synthesis in Arabidopsis.</title>
        <authorList>
            <person name="Jensen J.K."/>
            <person name="Kim H."/>
            <person name="Cocuron J.C."/>
            <person name="Orler R."/>
            <person name="Ralph J."/>
            <person name="Wilkerson C.G."/>
        </authorList>
    </citation>
    <scope>TISSUE SPECIFICITY</scope>
</reference>
<reference key="6">
    <citation type="journal article" date="2011" name="Plant J.">
        <title>Arabidopsis genes IRREGULAR XYLEM (IRX15) and IRX15L encode DUF579-containing proteins that are essential for normal xylan deposition in the secondary cell wall.</title>
        <authorList>
            <person name="Brown D."/>
            <person name="Wightman R."/>
            <person name="Zhang Z."/>
            <person name="Gomez L.D."/>
            <person name="Atanassov I."/>
            <person name="Bukowski J.P."/>
            <person name="Tryfona T."/>
            <person name="McQueen-Mason S.J."/>
            <person name="Dupree P."/>
            <person name="Turner S."/>
        </authorList>
    </citation>
    <scope>DISRUPTION PHENOTYPE</scope>
    <scope>DEVELOPMENTAL STAGE</scope>
</reference>
<evidence type="ECO:0000255" key="1"/>
<evidence type="ECO:0000269" key="2">
    <source>
    </source>
</evidence>
<evidence type="ECO:0000269" key="3">
    <source>
    </source>
</evidence>
<evidence type="ECO:0000269" key="4">
    <source>
    </source>
</evidence>
<evidence type="ECO:0000305" key="5"/>
<feature type="chain" id="PRO_0000420838" description="Glucuronoxylan 4-O-methyltransferase 2">
    <location>
        <begin position="1"/>
        <end position="290"/>
    </location>
</feature>
<feature type="transmembrane region" description="Helical" evidence="1">
    <location>
        <begin position="8"/>
        <end position="28"/>
    </location>
</feature>
<protein>
    <recommendedName>
        <fullName>Glucuronoxylan 4-O-methyltransferase 2</fullName>
        <ecNumber>2.1.1.112</ecNumber>
    </recommendedName>
</protein>
<proteinExistence type="evidence at protein level"/>
<dbReference type="EC" id="2.1.1.112"/>
<dbReference type="EMBL" id="JX914595">
    <property type="protein sequence ID" value="AFU91593.1"/>
    <property type="molecule type" value="mRNA"/>
</dbReference>
<dbReference type="EMBL" id="AL049481">
    <property type="protein sequence ID" value="CAB39623.1"/>
    <property type="molecule type" value="Genomic_DNA"/>
</dbReference>
<dbReference type="EMBL" id="AL161516">
    <property type="protein sequence ID" value="CAB78122.1"/>
    <property type="molecule type" value="Genomic_DNA"/>
</dbReference>
<dbReference type="EMBL" id="CP002687">
    <property type="protein sequence ID" value="AEE82826.1"/>
    <property type="molecule type" value="Genomic_DNA"/>
</dbReference>
<dbReference type="EMBL" id="BT030090">
    <property type="protein sequence ID" value="ABN04828.1"/>
    <property type="molecule type" value="mRNA"/>
</dbReference>
<dbReference type="PIR" id="T04003">
    <property type="entry name" value="T04003"/>
</dbReference>
<dbReference type="RefSeq" id="NP_192737.1">
    <property type="nucleotide sequence ID" value="NM_117067.4"/>
</dbReference>
<dbReference type="FunCoup" id="Q9T0F7">
    <property type="interactions" value="208"/>
</dbReference>
<dbReference type="STRING" id="3702.Q9T0F7"/>
<dbReference type="PaxDb" id="3702-AT4G09990.1"/>
<dbReference type="ProteomicsDB" id="247156"/>
<dbReference type="EnsemblPlants" id="AT4G09990.1">
    <property type="protein sequence ID" value="AT4G09990.1"/>
    <property type="gene ID" value="AT4G09990"/>
</dbReference>
<dbReference type="GeneID" id="826590"/>
<dbReference type="Gramene" id="AT4G09990.1">
    <property type="protein sequence ID" value="AT4G09990.1"/>
    <property type="gene ID" value="AT4G09990"/>
</dbReference>
<dbReference type="KEGG" id="ath:AT4G09990"/>
<dbReference type="Araport" id="AT4G09990"/>
<dbReference type="TAIR" id="AT4G09990">
    <property type="gene designation" value="GXM2"/>
</dbReference>
<dbReference type="eggNOG" id="ENOG502QST5">
    <property type="taxonomic scope" value="Eukaryota"/>
</dbReference>
<dbReference type="HOGENOM" id="CLU_053427_0_0_1"/>
<dbReference type="InParanoid" id="Q9T0F7"/>
<dbReference type="OMA" id="YETEWDI"/>
<dbReference type="PhylomeDB" id="Q9T0F7"/>
<dbReference type="PRO" id="PR:Q9T0F7"/>
<dbReference type="Proteomes" id="UP000006548">
    <property type="component" value="Chromosome 4"/>
</dbReference>
<dbReference type="ExpressionAtlas" id="Q9T0F7">
    <property type="expression patterns" value="baseline and differential"/>
</dbReference>
<dbReference type="GO" id="GO:0005794">
    <property type="term" value="C:Golgi apparatus"/>
    <property type="evidence" value="ECO:0000314"/>
    <property type="project" value="TAIR"/>
</dbReference>
<dbReference type="GO" id="GO:0000139">
    <property type="term" value="C:Golgi membrane"/>
    <property type="evidence" value="ECO:0007669"/>
    <property type="project" value="UniProtKB-SubCell"/>
</dbReference>
<dbReference type="GO" id="GO:0030775">
    <property type="term" value="F:glucuronoxylan 4-O-methyltransferase activity"/>
    <property type="evidence" value="ECO:0000314"/>
    <property type="project" value="TAIR"/>
</dbReference>
<dbReference type="GO" id="GO:0032259">
    <property type="term" value="P:methylation"/>
    <property type="evidence" value="ECO:0007669"/>
    <property type="project" value="UniProtKB-KW"/>
</dbReference>
<dbReference type="GO" id="GO:0045492">
    <property type="term" value="P:xylan biosynthetic process"/>
    <property type="evidence" value="ECO:0007669"/>
    <property type="project" value="InterPro"/>
</dbReference>
<dbReference type="GO" id="GO:0045491">
    <property type="term" value="P:xylan metabolic process"/>
    <property type="evidence" value="ECO:0000315"/>
    <property type="project" value="TAIR"/>
</dbReference>
<dbReference type="InterPro" id="IPR006514">
    <property type="entry name" value="IRX15/GXM/AGM"/>
</dbReference>
<dbReference type="NCBIfam" id="TIGR01627">
    <property type="entry name" value="A_thal_3515"/>
    <property type="match status" value="1"/>
</dbReference>
<dbReference type="PANTHER" id="PTHR31444">
    <property type="entry name" value="OS11G0490100 PROTEIN"/>
    <property type="match status" value="1"/>
</dbReference>
<dbReference type="Pfam" id="PF21729">
    <property type="entry name" value="IRX15_IRX15L_GXM"/>
    <property type="match status" value="1"/>
</dbReference>
<organism>
    <name type="scientific">Arabidopsis thaliana</name>
    <name type="common">Mouse-ear cress</name>
    <dbReference type="NCBI Taxonomy" id="3702"/>
    <lineage>
        <taxon>Eukaryota</taxon>
        <taxon>Viridiplantae</taxon>
        <taxon>Streptophyta</taxon>
        <taxon>Embryophyta</taxon>
        <taxon>Tracheophyta</taxon>
        <taxon>Spermatophyta</taxon>
        <taxon>Magnoliopsida</taxon>
        <taxon>eudicotyledons</taxon>
        <taxon>Gunneridae</taxon>
        <taxon>Pentapetalae</taxon>
        <taxon>rosids</taxon>
        <taxon>malvids</taxon>
        <taxon>Brassicales</taxon>
        <taxon>Brassicaceae</taxon>
        <taxon>Camelineae</taxon>
        <taxon>Arabidopsis</taxon>
    </lineage>
</organism>
<gene>
    <name type="primary">GXM2</name>
    <name type="ordered locus">At4g09990</name>
    <name type="ORF">T5L19.120</name>
</gene>
<comment type="function">
    <text evidence="4">Methyltransferase catalyzing 4-O-methylation of glucuronic acid side chains on xylan.</text>
</comment>
<comment type="catalytic activity">
    <reaction evidence="4">
        <text>glucuronoxylan D-glucuronate + n S-adenosyl-L-methionine = glucuronoxylan 4-O-methyl-D-glucuronate + n S-adenosyl-L-homocysteine + n H(+)</text>
        <dbReference type="Rhea" id="RHEA:20413"/>
        <dbReference type="Rhea" id="RHEA-COMP:14499"/>
        <dbReference type="Rhea" id="RHEA-COMP:14500"/>
        <dbReference type="ChEBI" id="CHEBI:15378"/>
        <dbReference type="ChEBI" id="CHEBI:57856"/>
        <dbReference type="ChEBI" id="CHEBI:59789"/>
        <dbReference type="ChEBI" id="CHEBI:140335"/>
        <dbReference type="ChEBI" id="CHEBI:140336"/>
        <dbReference type="EC" id="2.1.1.112"/>
    </reaction>
</comment>
<comment type="subcellular location">
    <subcellularLocation>
        <location evidence="4">Golgi apparatus membrane</location>
        <topology evidence="4">Single-pass membrane protein</topology>
    </subcellularLocation>
</comment>
<comment type="tissue specificity">
    <text evidence="3 4">Expressed in roots, rosette leaves and stems.</text>
</comment>
<comment type="developmental stage">
    <text evidence="2">Up-regulated during secondary cell wall deposition.</text>
</comment>
<comment type="disruption phenotype">
    <text evidence="2 4">No visible phenotype; due to the redundancy with GXM1 and GXM3. Gxm2 and gxm3 double mutants show reduced stem mechanical strength.</text>
</comment>
<comment type="similarity">
    <text evidence="5">Belongs to the methyltransferase superfamily.</text>
</comment>
<sequence length="290" mass="32837">MRNKSQSFISSKLIFICCSILVLFILFLKRASFSSNSTATIRDEYHQKSKCPSTPQQCTKLPTSLSDALVHYVTSEITPQQTFDEVSVSKRVLDKKSPCNFLVFGLGHDSLMWASLNHGGRTLFLEEDEAWIETVTKKFPNLESYHVVYDTKVKDSNKLMELKRTEDCKAVSDPRDSKCALSLKGFPADVYETQWDVIMVDAPTGYHDEAPGRMSAIYTAGLLARNRYDGGETDVFVHDINRPVEDEFSVAFLCGGYMKEQQGRLRHFNIPSHRASFGTPFCPADISRRF</sequence>